<accession>B0CIF7</accession>
<sequence length="469" mass="50712">MSAPRTLYDKIWDDHVVDQQEDGTCLLYIDRHLVHEVTSPQAFEGLRMAGRPVRHPEKTLAVVDHNVPTSPDRINGIQNEESRIQVEALARNAADFGVEYYSERDKRQGIVHIVGPEQGFTLPGMTIVCGDSHTSTHGAFGALAHGIGTSEVEHVLATQTLIQKKAKNMLVRVDGKLPAGVTAKDIVLAIIGEIGTAGGTGYVIEYAGEAIRSLSMEGRMTICNMSIEGGARAGLIAPDETTFEYIKGRPRAPQGETLEQAINYWKTLHSDEGAHFDKIVTLDAGSLPPIVSWGSSPEDVVSVTGVVPNPDDIADETKRASKWRALDYMGLKPGTKITDIAVDRVFIGSCTNGRIEDLRAAAKVVEGKKVAPTVNAMIVPGSGLVKEQAEAEGLHKIFIEAGFDWREPGCSMCLAMNDDRLKPGERCASTSNRNFEGRQGFKGRTHLVSPAMAAAAAIAGHFVDIRAWK</sequence>
<reference key="1">
    <citation type="submission" date="2007-12" db="EMBL/GenBank/DDBJ databases">
        <title>Brucella suis ATCC 23445 whole genome shotgun sequencing project.</title>
        <authorList>
            <person name="Setubal J.C."/>
            <person name="Bowns C."/>
            <person name="Boyle S."/>
            <person name="Crasta O.R."/>
            <person name="Czar M.J."/>
            <person name="Dharmanolla C."/>
            <person name="Gillespie J.J."/>
            <person name="Kenyon R.W."/>
            <person name="Lu J."/>
            <person name="Mane S."/>
            <person name="Mohapatra S."/>
            <person name="Nagrani S."/>
            <person name="Purkayastha A."/>
            <person name="Rajasimha H.K."/>
            <person name="Shallom J.M."/>
            <person name="Shallom S."/>
            <person name="Shukla M."/>
            <person name="Snyder E.E."/>
            <person name="Sobral B.W."/>
            <person name="Wattam A.R."/>
            <person name="Will R."/>
            <person name="Williams K."/>
            <person name="Yoo H."/>
            <person name="Bruce D."/>
            <person name="Detter C."/>
            <person name="Munk C."/>
            <person name="Brettin T.S."/>
        </authorList>
    </citation>
    <scope>NUCLEOTIDE SEQUENCE [LARGE SCALE GENOMIC DNA]</scope>
    <source>
        <strain>ATCC 23445 / NCTC 10510</strain>
    </source>
</reference>
<proteinExistence type="inferred from homology"/>
<gene>
    <name evidence="1" type="primary">leuC</name>
    <name type="ordered locus">BSUIS_A1746</name>
</gene>
<evidence type="ECO:0000255" key="1">
    <source>
        <dbReference type="HAMAP-Rule" id="MF_01026"/>
    </source>
</evidence>
<keyword id="KW-0004">4Fe-4S</keyword>
<keyword id="KW-0028">Amino-acid biosynthesis</keyword>
<keyword id="KW-0100">Branched-chain amino acid biosynthesis</keyword>
<keyword id="KW-0408">Iron</keyword>
<keyword id="KW-0411">Iron-sulfur</keyword>
<keyword id="KW-0432">Leucine biosynthesis</keyword>
<keyword id="KW-0456">Lyase</keyword>
<keyword id="KW-0479">Metal-binding</keyword>
<protein>
    <recommendedName>
        <fullName evidence="1">3-isopropylmalate dehydratase large subunit</fullName>
        <ecNumber evidence="1">4.2.1.33</ecNumber>
    </recommendedName>
    <alternativeName>
        <fullName evidence="1">Alpha-IPM isomerase</fullName>
        <shortName evidence="1">IPMI</shortName>
    </alternativeName>
    <alternativeName>
        <fullName evidence="1">Isopropylmalate isomerase</fullName>
    </alternativeName>
</protein>
<comment type="function">
    <text evidence="1">Catalyzes the isomerization between 2-isopropylmalate and 3-isopropylmalate, via the formation of 2-isopropylmaleate.</text>
</comment>
<comment type="catalytic activity">
    <reaction evidence="1">
        <text>(2R,3S)-3-isopropylmalate = (2S)-2-isopropylmalate</text>
        <dbReference type="Rhea" id="RHEA:32287"/>
        <dbReference type="ChEBI" id="CHEBI:1178"/>
        <dbReference type="ChEBI" id="CHEBI:35121"/>
        <dbReference type="EC" id="4.2.1.33"/>
    </reaction>
</comment>
<comment type="cofactor">
    <cofactor evidence="1">
        <name>[4Fe-4S] cluster</name>
        <dbReference type="ChEBI" id="CHEBI:49883"/>
    </cofactor>
    <text evidence="1">Binds 1 [4Fe-4S] cluster per subunit.</text>
</comment>
<comment type="pathway">
    <text evidence="1">Amino-acid biosynthesis; L-leucine biosynthesis; L-leucine from 3-methyl-2-oxobutanoate: step 2/4.</text>
</comment>
<comment type="subunit">
    <text evidence="1">Heterodimer of LeuC and LeuD.</text>
</comment>
<comment type="similarity">
    <text evidence="1">Belongs to the aconitase/IPM isomerase family. LeuC type 1 subfamily.</text>
</comment>
<name>LEUC_BRUSI</name>
<feature type="chain" id="PRO_1000084210" description="3-isopropylmalate dehydratase large subunit">
    <location>
        <begin position="1"/>
        <end position="469"/>
    </location>
</feature>
<feature type="binding site" evidence="1">
    <location>
        <position position="350"/>
    </location>
    <ligand>
        <name>[4Fe-4S] cluster</name>
        <dbReference type="ChEBI" id="CHEBI:49883"/>
    </ligand>
</feature>
<feature type="binding site" evidence="1">
    <location>
        <position position="410"/>
    </location>
    <ligand>
        <name>[4Fe-4S] cluster</name>
        <dbReference type="ChEBI" id="CHEBI:49883"/>
    </ligand>
</feature>
<feature type="binding site" evidence="1">
    <location>
        <position position="413"/>
    </location>
    <ligand>
        <name>[4Fe-4S] cluster</name>
        <dbReference type="ChEBI" id="CHEBI:49883"/>
    </ligand>
</feature>
<dbReference type="EC" id="4.2.1.33" evidence="1"/>
<dbReference type="EMBL" id="CP000911">
    <property type="protein sequence ID" value="ABY38763.1"/>
    <property type="molecule type" value="Genomic_DNA"/>
</dbReference>
<dbReference type="RefSeq" id="WP_002964974.1">
    <property type="nucleotide sequence ID" value="NC_010169.1"/>
</dbReference>
<dbReference type="SMR" id="B0CIF7"/>
<dbReference type="GeneID" id="93017762"/>
<dbReference type="KEGG" id="bmt:BSUIS_A1746"/>
<dbReference type="HOGENOM" id="CLU_006714_3_4_5"/>
<dbReference type="UniPathway" id="UPA00048">
    <property type="reaction ID" value="UER00071"/>
</dbReference>
<dbReference type="PRO" id="PR:B0CIF7"/>
<dbReference type="Proteomes" id="UP000008545">
    <property type="component" value="Chromosome I"/>
</dbReference>
<dbReference type="GO" id="GO:0003861">
    <property type="term" value="F:3-isopropylmalate dehydratase activity"/>
    <property type="evidence" value="ECO:0007669"/>
    <property type="project" value="UniProtKB-UniRule"/>
</dbReference>
<dbReference type="GO" id="GO:0051539">
    <property type="term" value="F:4 iron, 4 sulfur cluster binding"/>
    <property type="evidence" value="ECO:0007669"/>
    <property type="project" value="UniProtKB-KW"/>
</dbReference>
<dbReference type="GO" id="GO:0046872">
    <property type="term" value="F:metal ion binding"/>
    <property type="evidence" value="ECO:0007669"/>
    <property type="project" value="UniProtKB-KW"/>
</dbReference>
<dbReference type="GO" id="GO:0009098">
    <property type="term" value="P:L-leucine biosynthetic process"/>
    <property type="evidence" value="ECO:0007669"/>
    <property type="project" value="UniProtKB-UniRule"/>
</dbReference>
<dbReference type="CDD" id="cd01583">
    <property type="entry name" value="IPMI"/>
    <property type="match status" value="1"/>
</dbReference>
<dbReference type="FunFam" id="3.30.499.10:FF:000006">
    <property type="entry name" value="3-isopropylmalate dehydratase large subunit"/>
    <property type="match status" value="1"/>
</dbReference>
<dbReference type="FunFam" id="3.30.499.10:FF:000007">
    <property type="entry name" value="3-isopropylmalate dehydratase large subunit"/>
    <property type="match status" value="1"/>
</dbReference>
<dbReference type="Gene3D" id="3.30.499.10">
    <property type="entry name" value="Aconitase, domain 3"/>
    <property type="match status" value="2"/>
</dbReference>
<dbReference type="HAMAP" id="MF_01026">
    <property type="entry name" value="LeuC_type1"/>
    <property type="match status" value="1"/>
</dbReference>
<dbReference type="InterPro" id="IPR004430">
    <property type="entry name" value="3-IsopropMal_deHydase_lsu"/>
</dbReference>
<dbReference type="InterPro" id="IPR015931">
    <property type="entry name" value="Acnase/IPM_dHydase_lsu_aba_1/3"/>
</dbReference>
<dbReference type="InterPro" id="IPR001030">
    <property type="entry name" value="Acoase/IPM_deHydtase_lsu_aba"/>
</dbReference>
<dbReference type="InterPro" id="IPR018136">
    <property type="entry name" value="Aconitase_4Fe-4S_BS"/>
</dbReference>
<dbReference type="InterPro" id="IPR036008">
    <property type="entry name" value="Aconitase_4Fe-4S_dom"/>
</dbReference>
<dbReference type="InterPro" id="IPR050067">
    <property type="entry name" value="IPM_dehydratase_rel_enz"/>
</dbReference>
<dbReference type="InterPro" id="IPR033941">
    <property type="entry name" value="IPMI_cat"/>
</dbReference>
<dbReference type="NCBIfam" id="TIGR00170">
    <property type="entry name" value="leuC"/>
    <property type="match status" value="1"/>
</dbReference>
<dbReference type="NCBIfam" id="NF004016">
    <property type="entry name" value="PRK05478.1"/>
    <property type="match status" value="1"/>
</dbReference>
<dbReference type="NCBIfam" id="NF009116">
    <property type="entry name" value="PRK12466.1"/>
    <property type="match status" value="1"/>
</dbReference>
<dbReference type="PANTHER" id="PTHR43822:SF9">
    <property type="entry name" value="3-ISOPROPYLMALATE DEHYDRATASE"/>
    <property type="match status" value="1"/>
</dbReference>
<dbReference type="PANTHER" id="PTHR43822">
    <property type="entry name" value="HOMOACONITASE, MITOCHONDRIAL-RELATED"/>
    <property type="match status" value="1"/>
</dbReference>
<dbReference type="Pfam" id="PF00330">
    <property type="entry name" value="Aconitase"/>
    <property type="match status" value="1"/>
</dbReference>
<dbReference type="PRINTS" id="PR00415">
    <property type="entry name" value="ACONITASE"/>
</dbReference>
<dbReference type="SUPFAM" id="SSF53732">
    <property type="entry name" value="Aconitase iron-sulfur domain"/>
    <property type="match status" value="1"/>
</dbReference>
<dbReference type="PROSITE" id="PS00450">
    <property type="entry name" value="ACONITASE_1"/>
    <property type="match status" value="1"/>
</dbReference>
<dbReference type="PROSITE" id="PS01244">
    <property type="entry name" value="ACONITASE_2"/>
    <property type="match status" value="1"/>
</dbReference>
<organism>
    <name type="scientific">Brucella suis (strain ATCC 23445 / NCTC 10510)</name>
    <dbReference type="NCBI Taxonomy" id="470137"/>
    <lineage>
        <taxon>Bacteria</taxon>
        <taxon>Pseudomonadati</taxon>
        <taxon>Pseudomonadota</taxon>
        <taxon>Alphaproteobacteria</taxon>
        <taxon>Hyphomicrobiales</taxon>
        <taxon>Brucellaceae</taxon>
        <taxon>Brucella/Ochrobactrum group</taxon>
        <taxon>Brucella</taxon>
    </lineage>
</organism>